<reference key="1">
    <citation type="journal article" date="2001" name="Lancet">
        <title>Whole genome sequencing of meticillin-resistant Staphylococcus aureus.</title>
        <authorList>
            <person name="Kuroda M."/>
            <person name="Ohta T."/>
            <person name="Uchiyama I."/>
            <person name="Baba T."/>
            <person name="Yuzawa H."/>
            <person name="Kobayashi I."/>
            <person name="Cui L."/>
            <person name="Oguchi A."/>
            <person name="Aoki K."/>
            <person name="Nagai Y."/>
            <person name="Lian J.-Q."/>
            <person name="Ito T."/>
            <person name="Kanamori M."/>
            <person name="Matsumaru H."/>
            <person name="Maruyama A."/>
            <person name="Murakami H."/>
            <person name="Hosoyama A."/>
            <person name="Mizutani-Ui Y."/>
            <person name="Takahashi N.K."/>
            <person name="Sawano T."/>
            <person name="Inoue R."/>
            <person name="Kaito C."/>
            <person name="Sekimizu K."/>
            <person name="Hirakawa H."/>
            <person name="Kuhara S."/>
            <person name="Goto S."/>
            <person name="Yabuzaki J."/>
            <person name="Kanehisa M."/>
            <person name="Yamashita A."/>
            <person name="Oshima K."/>
            <person name="Furuya K."/>
            <person name="Yoshino C."/>
            <person name="Shiba T."/>
            <person name="Hattori M."/>
            <person name="Ogasawara N."/>
            <person name="Hayashi H."/>
            <person name="Hiramatsu K."/>
        </authorList>
    </citation>
    <scope>NUCLEOTIDE SEQUENCE [LARGE SCALE GENOMIC DNA]</scope>
    <source>
        <strain>N315</strain>
    </source>
</reference>
<keyword id="KW-0963">Cytoplasm</keyword>
<keyword id="KW-0441">Lipid A biosynthesis</keyword>
<keyword id="KW-0444">Lipid biosynthesis</keyword>
<keyword id="KW-0443">Lipid metabolism</keyword>
<keyword id="KW-0456">Lyase</keyword>
<comment type="function">
    <text evidence="1">Involved in unsaturated fatty acids biosynthesis. Catalyzes the dehydration of short chain beta-hydroxyacyl-ACPs and long chain saturated and unsaturated beta-hydroxyacyl-ACPs.</text>
</comment>
<comment type="catalytic activity">
    <reaction evidence="1">
        <text>a (3R)-hydroxyacyl-[ACP] = a (2E)-enoyl-[ACP] + H2O</text>
        <dbReference type="Rhea" id="RHEA:13097"/>
        <dbReference type="Rhea" id="RHEA-COMP:9925"/>
        <dbReference type="Rhea" id="RHEA-COMP:9945"/>
        <dbReference type="ChEBI" id="CHEBI:15377"/>
        <dbReference type="ChEBI" id="CHEBI:78784"/>
        <dbReference type="ChEBI" id="CHEBI:78827"/>
        <dbReference type="EC" id="4.2.1.59"/>
    </reaction>
</comment>
<comment type="subcellular location">
    <subcellularLocation>
        <location evidence="1">Cytoplasm</location>
    </subcellularLocation>
</comment>
<comment type="similarity">
    <text evidence="1">Belongs to the thioester dehydratase family. FabZ subfamily.</text>
</comment>
<accession>P64108</accession>
<accession>Q99SF9</accession>
<gene>
    <name evidence="1" type="primary">fabZ</name>
    <name type="ordered locus">SA1901</name>
</gene>
<evidence type="ECO:0000255" key="1">
    <source>
        <dbReference type="HAMAP-Rule" id="MF_00406"/>
    </source>
</evidence>
<protein>
    <recommendedName>
        <fullName evidence="1">3-hydroxyacyl-[acyl-carrier-protein] dehydratase FabZ</fullName>
        <ecNumber evidence="1">4.2.1.59</ecNumber>
    </recommendedName>
    <alternativeName>
        <fullName evidence="1">(3R)-hydroxymyristoyl-[acyl-carrier-protein] dehydratase</fullName>
        <shortName evidence="1">(3R)-hydroxymyristoyl-ACP dehydrase</shortName>
    </alternativeName>
    <alternativeName>
        <fullName evidence="1">Beta-hydroxyacyl-ACP dehydratase</fullName>
    </alternativeName>
</protein>
<organism>
    <name type="scientific">Staphylococcus aureus (strain N315)</name>
    <dbReference type="NCBI Taxonomy" id="158879"/>
    <lineage>
        <taxon>Bacteria</taxon>
        <taxon>Bacillati</taxon>
        <taxon>Bacillota</taxon>
        <taxon>Bacilli</taxon>
        <taxon>Bacillales</taxon>
        <taxon>Staphylococcaceae</taxon>
        <taxon>Staphylococcus</taxon>
    </lineage>
</organism>
<sequence>METIFDYNQIKQIIPHRQPFLLIDKVVEYEEGQRCVAIKQVSGNEPFFQGHFPEYAVMPGVLITEALAQTGAVAILNSEENKGKIALFAGIDKCRFKRQVVPGDTLTLEVEITKIKGPIGKGNAKATVDGQLACSCELTFAIQDVK</sequence>
<proteinExistence type="inferred from homology"/>
<name>FABZ_STAAN</name>
<feature type="chain" id="PRO_0000091732" description="3-hydroxyacyl-[acyl-carrier-protein] dehydratase FabZ">
    <location>
        <begin position="1"/>
        <end position="146"/>
    </location>
</feature>
<feature type="active site" evidence="1">
    <location>
        <position position="51"/>
    </location>
</feature>
<dbReference type="EC" id="4.2.1.59" evidence="1"/>
<dbReference type="EMBL" id="BA000018">
    <property type="protein sequence ID" value="BAB43185.1"/>
    <property type="molecule type" value="Genomic_DNA"/>
</dbReference>
<dbReference type="PIR" id="H90002">
    <property type="entry name" value="H90002"/>
</dbReference>
<dbReference type="RefSeq" id="WP_000447678.1">
    <property type="nucleotide sequence ID" value="NC_002745.2"/>
</dbReference>
<dbReference type="SMR" id="P64108"/>
<dbReference type="EnsemblBacteria" id="BAB43185">
    <property type="protein sequence ID" value="BAB43185"/>
    <property type="gene ID" value="BAB43185"/>
</dbReference>
<dbReference type="KEGG" id="sau:SA1901"/>
<dbReference type="HOGENOM" id="CLU_078912_3_0_9"/>
<dbReference type="GO" id="GO:0005737">
    <property type="term" value="C:cytoplasm"/>
    <property type="evidence" value="ECO:0007669"/>
    <property type="project" value="UniProtKB-SubCell"/>
</dbReference>
<dbReference type="GO" id="GO:0016020">
    <property type="term" value="C:membrane"/>
    <property type="evidence" value="ECO:0007669"/>
    <property type="project" value="GOC"/>
</dbReference>
<dbReference type="GO" id="GO:0019171">
    <property type="term" value="F:(3R)-hydroxyacyl-[acyl-carrier-protein] dehydratase activity"/>
    <property type="evidence" value="ECO:0007669"/>
    <property type="project" value="UniProtKB-EC"/>
</dbReference>
<dbReference type="GO" id="GO:0006633">
    <property type="term" value="P:fatty acid biosynthetic process"/>
    <property type="evidence" value="ECO:0007669"/>
    <property type="project" value="UniProtKB-UniRule"/>
</dbReference>
<dbReference type="GO" id="GO:0009245">
    <property type="term" value="P:lipid A biosynthetic process"/>
    <property type="evidence" value="ECO:0007669"/>
    <property type="project" value="UniProtKB-UniRule"/>
</dbReference>
<dbReference type="CDD" id="cd01288">
    <property type="entry name" value="FabZ"/>
    <property type="match status" value="1"/>
</dbReference>
<dbReference type="FunFam" id="3.10.129.10:FF:000001">
    <property type="entry name" value="3-hydroxyacyl-[acyl-carrier-protein] dehydratase FabZ"/>
    <property type="match status" value="1"/>
</dbReference>
<dbReference type="Gene3D" id="3.10.129.10">
    <property type="entry name" value="Hotdog Thioesterase"/>
    <property type="match status" value="1"/>
</dbReference>
<dbReference type="HAMAP" id="MF_00406">
    <property type="entry name" value="FabZ"/>
    <property type="match status" value="1"/>
</dbReference>
<dbReference type="InterPro" id="IPR013114">
    <property type="entry name" value="FabA_FabZ"/>
</dbReference>
<dbReference type="InterPro" id="IPR010084">
    <property type="entry name" value="FabZ"/>
</dbReference>
<dbReference type="InterPro" id="IPR029069">
    <property type="entry name" value="HotDog_dom_sf"/>
</dbReference>
<dbReference type="NCBIfam" id="TIGR01750">
    <property type="entry name" value="fabZ"/>
    <property type="match status" value="1"/>
</dbReference>
<dbReference type="NCBIfam" id="NF000582">
    <property type="entry name" value="PRK00006.1"/>
    <property type="match status" value="1"/>
</dbReference>
<dbReference type="PANTHER" id="PTHR30272">
    <property type="entry name" value="3-HYDROXYACYL-[ACYL-CARRIER-PROTEIN] DEHYDRATASE"/>
    <property type="match status" value="1"/>
</dbReference>
<dbReference type="PANTHER" id="PTHR30272:SF1">
    <property type="entry name" value="3-HYDROXYACYL-[ACYL-CARRIER-PROTEIN] DEHYDRATASE"/>
    <property type="match status" value="1"/>
</dbReference>
<dbReference type="Pfam" id="PF07977">
    <property type="entry name" value="FabA"/>
    <property type="match status" value="1"/>
</dbReference>
<dbReference type="SUPFAM" id="SSF54637">
    <property type="entry name" value="Thioesterase/thiol ester dehydrase-isomerase"/>
    <property type="match status" value="1"/>
</dbReference>